<protein>
    <recommendedName>
        <fullName>F-actin-capping protein subunit alpha-2</fullName>
    </recommendedName>
    <alternativeName>
        <fullName>CapZ alpha-2</fullName>
    </alternativeName>
</protein>
<keyword id="KW-0007">Acetylation</keyword>
<keyword id="KW-0117">Actin capping</keyword>
<keyword id="KW-0009">Actin-binding</keyword>
<keyword id="KW-0597">Phosphoprotein</keyword>
<dbReference type="EMBL" id="DP000012">
    <property type="protein sequence ID" value="ABA02583.1"/>
    <property type="molecule type" value="Genomic_DNA"/>
</dbReference>
<dbReference type="SMR" id="A4D7S9"/>
<dbReference type="GO" id="GO:0030863">
    <property type="term" value="C:cortical cytoskeleton"/>
    <property type="evidence" value="ECO:0007669"/>
    <property type="project" value="TreeGrafter"/>
</dbReference>
<dbReference type="GO" id="GO:0008290">
    <property type="term" value="C:F-actin capping protein complex"/>
    <property type="evidence" value="ECO:0007669"/>
    <property type="project" value="InterPro"/>
</dbReference>
<dbReference type="GO" id="GO:0051015">
    <property type="term" value="F:actin filament binding"/>
    <property type="evidence" value="ECO:0007669"/>
    <property type="project" value="TreeGrafter"/>
</dbReference>
<dbReference type="GO" id="GO:0030036">
    <property type="term" value="P:actin cytoskeleton organization"/>
    <property type="evidence" value="ECO:0007669"/>
    <property type="project" value="TreeGrafter"/>
</dbReference>
<dbReference type="GO" id="GO:0051016">
    <property type="term" value="P:barbed-end actin filament capping"/>
    <property type="evidence" value="ECO:0007669"/>
    <property type="project" value="InterPro"/>
</dbReference>
<dbReference type="FunFam" id="3.30.1140.60:FF:000001">
    <property type="entry name" value="F-actin-capping protein subunit alpha"/>
    <property type="match status" value="1"/>
</dbReference>
<dbReference type="FunFam" id="3.90.1150.210:FF:000002">
    <property type="entry name" value="F-actin-capping protein subunit alpha"/>
    <property type="match status" value="1"/>
</dbReference>
<dbReference type="Gene3D" id="3.30.1140.60">
    <property type="entry name" value="F-actin capping protein, alpha subunit"/>
    <property type="match status" value="1"/>
</dbReference>
<dbReference type="Gene3D" id="3.90.1150.210">
    <property type="entry name" value="F-actin capping protein, beta subunit"/>
    <property type="match status" value="1"/>
</dbReference>
<dbReference type="InterPro" id="IPR002189">
    <property type="entry name" value="CapZ_alpha"/>
</dbReference>
<dbReference type="InterPro" id="IPR037282">
    <property type="entry name" value="CapZ_alpha/beta"/>
</dbReference>
<dbReference type="InterPro" id="IPR042276">
    <property type="entry name" value="CapZ_alpha/beta_2"/>
</dbReference>
<dbReference type="InterPro" id="IPR042489">
    <property type="entry name" value="CapZ_alpha_1"/>
</dbReference>
<dbReference type="InterPro" id="IPR017865">
    <property type="entry name" value="F-actin_cap_asu_CS"/>
</dbReference>
<dbReference type="PANTHER" id="PTHR10653">
    <property type="entry name" value="F-ACTIN-CAPPING PROTEIN SUBUNIT ALPHA"/>
    <property type="match status" value="1"/>
</dbReference>
<dbReference type="PANTHER" id="PTHR10653:SF2">
    <property type="entry name" value="F-ACTIN-CAPPING PROTEIN SUBUNIT ALPHA-2"/>
    <property type="match status" value="1"/>
</dbReference>
<dbReference type="Pfam" id="PF01267">
    <property type="entry name" value="F-actin_cap_A"/>
    <property type="match status" value="1"/>
</dbReference>
<dbReference type="PRINTS" id="PR00191">
    <property type="entry name" value="FACTINCAPA"/>
</dbReference>
<dbReference type="SUPFAM" id="SSF90096">
    <property type="entry name" value="Subunits of heterodimeric actin filament capping protein Capz"/>
    <property type="match status" value="1"/>
</dbReference>
<dbReference type="PROSITE" id="PS00748">
    <property type="entry name" value="F_ACTIN_CAPPING_A_1"/>
    <property type="match status" value="1"/>
</dbReference>
<dbReference type="PROSITE" id="PS00749">
    <property type="entry name" value="F_ACTIN_CAPPING_A_2"/>
    <property type="match status" value="1"/>
</dbReference>
<reference key="1">
    <citation type="submission" date="2005-08" db="EMBL/GenBank/DDBJ databases">
        <title>NISC comparative sequencing initiative.</title>
        <authorList>
            <person name="Antonellis A."/>
            <person name="Ayele K."/>
            <person name="Benjamin B."/>
            <person name="Blakesley R.W."/>
            <person name="Boakye A."/>
            <person name="Bouffard G.G."/>
            <person name="Brinkley C."/>
            <person name="Brooks S."/>
            <person name="Chu G."/>
            <person name="Coleman H."/>
            <person name="Engle J."/>
            <person name="Gestole M."/>
            <person name="Greene A."/>
            <person name="Guan X."/>
            <person name="Gupta J."/>
            <person name="Haghighi P."/>
            <person name="Han J."/>
            <person name="Hansen N."/>
            <person name="Ho S.-L."/>
            <person name="Hu P."/>
            <person name="Hunter G."/>
            <person name="Hurle B."/>
            <person name="Idol J.R."/>
            <person name="Kwong P."/>
            <person name="Laric P."/>
            <person name="Larson S."/>
            <person name="Lee-Lin S.-Q."/>
            <person name="Legaspi R."/>
            <person name="Madden M."/>
            <person name="Maduro Q.L."/>
            <person name="Maduro V.B."/>
            <person name="Margulies E.H."/>
            <person name="Masiello C."/>
            <person name="Maskeri B."/>
            <person name="McDowell J."/>
            <person name="Mojidi H.A."/>
            <person name="Mullikin J.C."/>
            <person name="Oestreicher J.S."/>
            <person name="Park M."/>
            <person name="Portnoy M.E."/>
            <person name="Prasad A."/>
            <person name="Puri O."/>
            <person name="Reddix-Dugue N."/>
            <person name="Schandler K."/>
            <person name="Schueler M.G."/>
            <person name="Sison C."/>
            <person name="Stantripop S."/>
            <person name="Stephen E."/>
            <person name="Taye A."/>
            <person name="Thomas J.W."/>
            <person name="Thomas P.J."/>
            <person name="Tsipouri V."/>
            <person name="Ung L."/>
            <person name="Vogt J.L."/>
            <person name="Wetherby K.D."/>
            <person name="Young A."/>
            <person name="Green E.D."/>
        </authorList>
    </citation>
    <scope>NUCLEOTIDE SEQUENCE [LARGE SCALE GENOMIC DNA]</scope>
</reference>
<gene>
    <name type="primary">CAPZA2</name>
</gene>
<evidence type="ECO:0000250" key="1"/>
<evidence type="ECO:0000250" key="2">
    <source>
        <dbReference type="UniProtKB" id="P47755"/>
    </source>
</evidence>
<evidence type="ECO:0000305" key="3"/>
<comment type="function">
    <text evidence="1">F-actin-capping proteins bind in a Ca(2+)-independent manner to the fast growing ends of actin filaments (barbed end) thereby blocking the exchange of subunits at these ends. Unlike other capping proteins (such as gelsolin and severin), these proteins do not sever actin filaments (By similarity).</text>
</comment>
<comment type="subunit">
    <text evidence="1 2">Component of the F-actin capping complex, composed of a heterodimer of an alpha and a beta subunit. Component of the WASH complex, composed of F-actin-capping protein subunit alpha (CAPZA1, CAPZA2 or CAPZA3), F-actin-capping protein subunit beta (CAPZB), WASHC1, WASHC2, WASHC3, WASHC4 and WASHC5. Interacts with RCSD1/CAPZIP (By similarity). Directly interacts with CRACD; this interaction decreases binding to actin (By similarity).</text>
</comment>
<comment type="similarity">
    <text evidence="3">Belongs to the F-actin-capping protein alpha subunit family.</text>
</comment>
<name>CAZA2_NOTEU</name>
<proteinExistence type="inferred from homology"/>
<organism>
    <name type="scientific">Notamacropus eugenii</name>
    <name type="common">Tammar wallaby</name>
    <name type="synonym">Macropus eugenii</name>
    <dbReference type="NCBI Taxonomy" id="9315"/>
    <lineage>
        <taxon>Eukaryota</taxon>
        <taxon>Metazoa</taxon>
        <taxon>Chordata</taxon>
        <taxon>Craniata</taxon>
        <taxon>Vertebrata</taxon>
        <taxon>Euteleostomi</taxon>
        <taxon>Mammalia</taxon>
        <taxon>Metatheria</taxon>
        <taxon>Diprotodontia</taxon>
        <taxon>Macropodidae</taxon>
        <taxon>Notamacropus</taxon>
    </lineage>
</organism>
<sequence>MADLEEQLSDEEKVRIAAKFIIHAPPGEFNEVFNDVRLLLNNDNLLREGAAHAFAQYNLDQFTPVKIEGYEEQVLITEHGDLGNGKFLDPKNRVSFKFDHLRKEATDPRPCEGENAIESWRHSVETAMRAYVKEHYPNGVCTVYGKTIDGQQTIIACIESHQFQAKNFWNGRWRSEWKFTITPSTTQVVGILKIQVHYYEDGNVQLVSHKDIQESLTVSNEVQTAKEFIKIVEAAENEYQTAISENYQTMSDTTFKALRRQLPVTRTKIDWNKILSYKIGKEMQNA</sequence>
<accession>A4D7S9</accession>
<feature type="initiator methionine" description="Removed" evidence="2">
    <location>
        <position position="1"/>
    </location>
</feature>
<feature type="chain" id="PRO_0000295859" description="F-actin-capping protein subunit alpha-2">
    <location>
        <begin position="2"/>
        <end position="286"/>
    </location>
</feature>
<feature type="modified residue" description="N-acetylalanine" evidence="2">
    <location>
        <position position="2"/>
    </location>
</feature>
<feature type="modified residue" description="Phosphoserine" evidence="2">
    <location>
        <position position="9"/>
    </location>
</feature>